<comment type="function">
    <text evidence="1">Involved in iron-sulfur cluster biogenesis. Binds a 4Fe-4S cluster, can transfer this cluster to apoproteins, and thereby intervenes in the maturation of Fe/S proteins. Could also act as a scaffold/chaperone for damaged Fe/S proteins.</text>
</comment>
<comment type="cofactor">
    <cofactor evidence="1">
        <name>[4Fe-4S] cluster</name>
        <dbReference type="ChEBI" id="CHEBI:49883"/>
    </cofactor>
    <text evidence="1">Binds 1 [4Fe-4S] cluster per subunit. The cluster is presumably bound at the interface of two monomers.</text>
</comment>
<comment type="subunit">
    <text evidence="1">Homodimer.</text>
</comment>
<comment type="similarity">
    <text evidence="1">Belongs to the NfuA family.</text>
</comment>
<proteinExistence type="inferred from homology"/>
<gene>
    <name evidence="1" type="primary">nfuA</name>
    <name type="ordered locus">ABAYE2813</name>
</gene>
<feature type="chain" id="PRO_1000186732" description="Fe/S biogenesis protein NfuA">
    <location>
        <begin position="1"/>
        <end position="212"/>
    </location>
</feature>
<feature type="binding site" evidence="1">
    <location>
        <position position="169"/>
    </location>
    <ligand>
        <name>[4Fe-4S] cluster</name>
        <dbReference type="ChEBI" id="CHEBI:49883"/>
    </ligand>
</feature>
<feature type="binding site" evidence="1">
    <location>
        <position position="172"/>
    </location>
    <ligand>
        <name>[4Fe-4S] cluster</name>
        <dbReference type="ChEBI" id="CHEBI:49883"/>
    </ligand>
</feature>
<accession>B0V9L0</accession>
<evidence type="ECO:0000255" key="1">
    <source>
        <dbReference type="HAMAP-Rule" id="MF_01637"/>
    </source>
</evidence>
<organism>
    <name type="scientific">Acinetobacter baumannii (strain AYE)</name>
    <dbReference type="NCBI Taxonomy" id="509173"/>
    <lineage>
        <taxon>Bacteria</taxon>
        <taxon>Pseudomonadati</taxon>
        <taxon>Pseudomonadota</taxon>
        <taxon>Gammaproteobacteria</taxon>
        <taxon>Moraxellales</taxon>
        <taxon>Moraxellaceae</taxon>
        <taxon>Acinetobacter</taxon>
        <taxon>Acinetobacter calcoaceticus/baumannii complex</taxon>
    </lineage>
</organism>
<name>NFUA_ACIBY</name>
<sequence>MSTENTNTAVAEEIPNLLITPSAQEYLHELLAKQNTPGIGVRIFVEHPGTPRAECCMAYSAPEEVVPTDYKQDYPDFPAYIDAPSIPYLLDAVIDYNKDRFGGQLTFRAPNSKVPRVGPDASIEERITYVLQAEINPGLAGHGGNCSLVEVQDDPEHGLTAVLKFGGGCQGCSAIDVTLKQGVETTLKEHIPELQRVVDQTDHTQAEGAYFK</sequence>
<protein>
    <recommendedName>
        <fullName evidence="1">Fe/S biogenesis protein NfuA</fullName>
    </recommendedName>
</protein>
<reference key="1">
    <citation type="journal article" date="2008" name="PLoS ONE">
        <title>Comparative analysis of Acinetobacters: three genomes for three lifestyles.</title>
        <authorList>
            <person name="Vallenet D."/>
            <person name="Nordmann P."/>
            <person name="Barbe V."/>
            <person name="Poirel L."/>
            <person name="Mangenot S."/>
            <person name="Bataille E."/>
            <person name="Dossat C."/>
            <person name="Gas S."/>
            <person name="Kreimeyer A."/>
            <person name="Lenoble P."/>
            <person name="Oztas S."/>
            <person name="Poulain J."/>
            <person name="Segurens B."/>
            <person name="Robert C."/>
            <person name="Abergel C."/>
            <person name="Claverie J.-M."/>
            <person name="Raoult D."/>
            <person name="Medigue C."/>
            <person name="Weissenbach J."/>
            <person name="Cruveiller S."/>
        </authorList>
    </citation>
    <scope>NUCLEOTIDE SEQUENCE [LARGE SCALE GENOMIC DNA]</scope>
    <source>
        <strain>AYE</strain>
    </source>
</reference>
<keyword id="KW-0004">4Fe-4S</keyword>
<keyword id="KW-0408">Iron</keyword>
<keyword id="KW-0411">Iron-sulfur</keyword>
<keyword id="KW-0479">Metal-binding</keyword>
<dbReference type="EMBL" id="CU459141">
    <property type="protein sequence ID" value="CAM87641.1"/>
    <property type="molecule type" value="Genomic_DNA"/>
</dbReference>
<dbReference type="RefSeq" id="WP_000102721.1">
    <property type="nucleotide sequence ID" value="NZ_JBDGFB010000015.1"/>
</dbReference>
<dbReference type="SMR" id="B0V9L0"/>
<dbReference type="EnsemblBacteria" id="CAM87641">
    <property type="protein sequence ID" value="CAM87641"/>
    <property type="gene ID" value="ABAYE2813"/>
</dbReference>
<dbReference type="GeneID" id="92892942"/>
<dbReference type="KEGG" id="aby:ABAYE2813"/>
<dbReference type="HOGENOM" id="CLU_094569_0_0_6"/>
<dbReference type="GO" id="GO:0051539">
    <property type="term" value="F:4 iron, 4 sulfur cluster binding"/>
    <property type="evidence" value="ECO:0007669"/>
    <property type="project" value="UniProtKB-UniRule"/>
</dbReference>
<dbReference type="GO" id="GO:0005506">
    <property type="term" value="F:iron ion binding"/>
    <property type="evidence" value="ECO:0007669"/>
    <property type="project" value="InterPro"/>
</dbReference>
<dbReference type="GO" id="GO:0016226">
    <property type="term" value="P:iron-sulfur cluster assembly"/>
    <property type="evidence" value="ECO:0007669"/>
    <property type="project" value="UniProtKB-UniRule"/>
</dbReference>
<dbReference type="GO" id="GO:0051604">
    <property type="term" value="P:protein maturation"/>
    <property type="evidence" value="ECO:0007669"/>
    <property type="project" value="UniProtKB-UniRule"/>
</dbReference>
<dbReference type="Gene3D" id="3.30.300.130">
    <property type="entry name" value="Fe-S cluster assembly (FSCA)"/>
    <property type="match status" value="1"/>
</dbReference>
<dbReference type="Gene3D" id="2.60.300.12">
    <property type="entry name" value="HesB-like domain"/>
    <property type="match status" value="1"/>
</dbReference>
<dbReference type="HAMAP" id="MF_01637">
    <property type="entry name" value="Fe_S_biogen_NfuA"/>
    <property type="match status" value="1"/>
</dbReference>
<dbReference type="InterPro" id="IPR017726">
    <property type="entry name" value="Fe/S_biogenesis_protein_NfuA"/>
</dbReference>
<dbReference type="InterPro" id="IPR000361">
    <property type="entry name" value="FeS_biogenesis"/>
</dbReference>
<dbReference type="InterPro" id="IPR034904">
    <property type="entry name" value="FSCA_dom_sf"/>
</dbReference>
<dbReference type="InterPro" id="IPR035903">
    <property type="entry name" value="HesB-like_dom_sf"/>
</dbReference>
<dbReference type="InterPro" id="IPR001075">
    <property type="entry name" value="NIF_FeS_clus_asmbl_NifU_C"/>
</dbReference>
<dbReference type="NCBIfam" id="TIGR03341">
    <property type="entry name" value="YhgI_GntY"/>
    <property type="match status" value="1"/>
</dbReference>
<dbReference type="PANTHER" id="PTHR11178:SF51">
    <property type="entry name" value="FE_S BIOGENESIS PROTEIN NFUA"/>
    <property type="match status" value="1"/>
</dbReference>
<dbReference type="PANTHER" id="PTHR11178">
    <property type="entry name" value="IRON-SULFUR CLUSTER SCAFFOLD PROTEIN NFU-RELATED"/>
    <property type="match status" value="1"/>
</dbReference>
<dbReference type="Pfam" id="PF01521">
    <property type="entry name" value="Fe-S_biosyn"/>
    <property type="match status" value="1"/>
</dbReference>
<dbReference type="Pfam" id="PF01106">
    <property type="entry name" value="NifU"/>
    <property type="match status" value="1"/>
</dbReference>
<dbReference type="SUPFAM" id="SSF117916">
    <property type="entry name" value="Fe-S cluster assembly (FSCA) domain-like"/>
    <property type="match status" value="1"/>
</dbReference>
<dbReference type="SUPFAM" id="SSF89360">
    <property type="entry name" value="HesB-like domain"/>
    <property type="match status" value="1"/>
</dbReference>